<comment type="function">
    <text>May function in reproductive organs during embryogenesis and seed maturation.</text>
</comment>
<comment type="catalytic activity">
    <reaction>
        <text>Random endo-hydrolysis of N-acetyl-beta-D-glucosaminide (1-&gt;4)-beta-linkages in chitin and chitodextrins.</text>
        <dbReference type="EC" id="3.2.1.14"/>
    </reaction>
</comment>
<comment type="tissue specificity">
    <text evidence="4">Expressed in sheaths and meristems and at lower levels in roots and leaves.</text>
</comment>
<comment type="similarity">
    <text evidence="5">Belongs to the glycosyl hydrolase 19 family. Chitinase class IV subfamily.</text>
</comment>
<accession>Q7Y1Z0</accession>
<accession>A0A0P0WC98</accession>
<accession>Q7XT47</accession>
<sequence length="288" mass="30487">MANSPTPTMLAFLALGLALLLSATGQASAQNCGCQSNMCCSKWGYCGTGKDYCGDGCRSGPCYGGGGGGGGGGGGGGGGGGGSGVSVESVVTEAFFNGIKNQAPNGCAGKNFYTRQSFLNAAHSYSGFARDRTNDDSKREIAAFFAHVTHETGHMCYINEINGASMDYCDKNNKQWPCQPGKKYYGRGPLQISWNYNYGPAGQNIGFDGLRDPDRVAQDPTISFKTALWFWMNNVHQVMLQGFGATIRAINGALECNGKNPGAVNARVNYYKDYCRQFGVDPGGNLYC</sequence>
<reference key="1">
    <citation type="journal article" date="2003" name="Biosci. Biotechnol. Biochem.">
        <title>Structure, heterologous expression, and properties of rice (Oryza sativa L.) family 19 chitinases.</title>
        <authorList>
            <person name="Truong N.-H."/>
            <person name="Park S.-M."/>
            <person name="Nishizawa Y."/>
            <person name="Watanabe T."/>
            <person name="Sasaki T."/>
            <person name="Itoh Y."/>
        </authorList>
    </citation>
    <scope>NUCLEOTIDE SEQUENCE [MRNA]</scope>
    <source>
        <strain>cv. Nipponbare</strain>
    </source>
</reference>
<reference key="2">
    <citation type="journal article" date="2002" name="Nature">
        <title>Sequence and analysis of rice chromosome 4.</title>
        <authorList>
            <person name="Feng Q."/>
            <person name="Zhang Y."/>
            <person name="Hao P."/>
            <person name="Wang S."/>
            <person name="Fu G."/>
            <person name="Huang Y."/>
            <person name="Li Y."/>
            <person name="Zhu J."/>
            <person name="Liu Y."/>
            <person name="Hu X."/>
            <person name="Jia P."/>
            <person name="Zhang Y."/>
            <person name="Zhao Q."/>
            <person name="Ying K."/>
            <person name="Yu S."/>
            <person name="Tang Y."/>
            <person name="Weng Q."/>
            <person name="Zhang L."/>
            <person name="Lu Y."/>
            <person name="Mu J."/>
            <person name="Lu Y."/>
            <person name="Zhang L.S."/>
            <person name="Yu Z."/>
            <person name="Fan D."/>
            <person name="Liu X."/>
            <person name="Lu T."/>
            <person name="Li C."/>
            <person name="Wu Y."/>
            <person name="Sun T."/>
            <person name="Lei H."/>
            <person name="Li T."/>
            <person name="Hu H."/>
            <person name="Guan J."/>
            <person name="Wu M."/>
            <person name="Zhang R."/>
            <person name="Zhou B."/>
            <person name="Chen Z."/>
            <person name="Chen L."/>
            <person name="Jin Z."/>
            <person name="Wang R."/>
            <person name="Yin H."/>
            <person name="Cai Z."/>
            <person name="Ren S."/>
            <person name="Lv G."/>
            <person name="Gu W."/>
            <person name="Zhu G."/>
            <person name="Tu Y."/>
            <person name="Jia J."/>
            <person name="Zhang Y."/>
            <person name="Chen J."/>
            <person name="Kang H."/>
            <person name="Chen X."/>
            <person name="Shao C."/>
            <person name="Sun Y."/>
            <person name="Hu Q."/>
            <person name="Zhang X."/>
            <person name="Zhang W."/>
            <person name="Wang L."/>
            <person name="Ding C."/>
            <person name="Sheng H."/>
            <person name="Gu J."/>
            <person name="Chen S."/>
            <person name="Ni L."/>
            <person name="Zhu F."/>
            <person name="Chen W."/>
            <person name="Lan L."/>
            <person name="Lai Y."/>
            <person name="Cheng Z."/>
            <person name="Gu M."/>
            <person name="Jiang J."/>
            <person name="Li J."/>
            <person name="Hong G."/>
            <person name="Xue Y."/>
            <person name="Han B."/>
        </authorList>
    </citation>
    <scope>NUCLEOTIDE SEQUENCE [LARGE SCALE GENOMIC DNA]</scope>
    <source>
        <strain>cv. Nipponbare</strain>
    </source>
</reference>
<reference key="3">
    <citation type="journal article" date="2005" name="Nature">
        <title>The map-based sequence of the rice genome.</title>
        <authorList>
            <consortium name="International rice genome sequencing project (IRGSP)"/>
        </authorList>
    </citation>
    <scope>NUCLEOTIDE SEQUENCE [LARGE SCALE GENOMIC DNA]</scope>
    <source>
        <strain>cv. Nipponbare</strain>
    </source>
</reference>
<reference key="4">
    <citation type="journal article" date="2008" name="Nucleic Acids Res.">
        <title>The rice annotation project database (RAP-DB): 2008 update.</title>
        <authorList>
            <consortium name="The rice annotation project (RAP)"/>
        </authorList>
    </citation>
    <scope>GENOME REANNOTATION</scope>
    <source>
        <strain>cv. Nipponbare</strain>
    </source>
</reference>
<reference key="5">
    <citation type="journal article" date="2013" name="Rice">
        <title>Improvement of the Oryza sativa Nipponbare reference genome using next generation sequence and optical map data.</title>
        <authorList>
            <person name="Kawahara Y."/>
            <person name="de la Bastide M."/>
            <person name="Hamilton J.P."/>
            <person name="Kanamori H."/>
            <person name="McCombie W.R."/>
            <person name="Ouyang S."/>
            <person name="Schwartz D.C."/>
            <person name="Tanaka T."/>
            <person name="Wu J."/>
            <person name="Zhou S."/>
            <person name="Childs K.L."/>
            <person name="Davidson R.M."/>
            <person name="Lin H."/>
            <person name="Quesada-Ocampo L."/>
            <person name="Vaillancourt B."/>
            <person name="Sakai H."/>
            <person name="Lee S.S."/>
            <person name="Kim J."/>
            <person name="Numa H."/>
            <person name="Itoh T."/>
            <person name="Buell C.R."/>
            <person name="Matsumoto T."/>
        </authorList>
    </citation>
    <scope>GENOME REANNOTATION</scope>
    <source>
        <strain>cv. Nipponbare</strain>
    </source>
</reference>
<reference key="6">
    <citation type="journal article" date="2005" name="PLoS Biol.">
        <title>The genomes of Oryza sativa: a history of duplications.</title>
        <authorList>
            <person name="Yu J."/>
            <person name="Wang J."/>
            <person name="Lin W."/>
            <person name="Li S."/>
            <person name="Li H."/>
            <person name="Zhou J."/>
            <person name="Ni P."/>
            <person name="Dong W."/>
            <person name="Hu S."/>
            <person name="Zeng C."/>
            <person name="Zhang J."/>
            <person name="Zhang Y."/>
            <person name="Li R."/>
            <person name="Xu Z."/>
            <person name="Li S."/>
            <person name="Li X."/>
            <person name="Zheng H."/>
            <person name="Cong L."/>
            <person name="Lin L."/>
            <person name="Yin J."/>
            <person name="Geng J."/>
            <person name="Li G."/>
            <person name="Shi J."/>
            <person name="Liu J."/>
            <person name="Lv H."/>
            <person name="Li J."/>
            <person name="Wang J."/>
            <person name="Deng Y."/>
            <person name="Ran L."/>
            <person name="Shi X."/>
            <person name="Wang X."/>
            <person name="Wu Q."/>
            <person name="Li C."/>
            <person name="Ren X."/>
            <person name="Wang J."/>
            <person name="Wang X."/>
            <person name="Li D."/>
            <person name="Liu D."/>
            <person name="Zhang X."/>
            <person name="Ji Z."/>
            <person name="Zhao W."/>
            <person name="Sun Y."/>
            <person name="Zhang Z."/>
            <person name="Bao J."/>
            <person name="Han Y."/>
            <person name="Dong L."/>
            <person name="Ji J."/>
            <person name="Chen P."/>
            <person name="Wu S."/>
            <person name="Liu J."/>
            <person name="Xiao Y."/>
            <person name="Bu D."/>
            <person name="Tan J."/>
            <person name="Yang L."/>
            <person name="Ye C."/>
            <person name="Zhang J."/>
            <person name="Xu J."/>
            <person name="Zhou Y."/>
            <person name="Yu Y."/>
            <person name="Zhang B."/>
            <person name="Zhuang S."/>
            <person name="Wei H."/>
            <person name="Liu B."/>
            <person name="Lei M."/>
            <person name="Yu H."/>
            <person name="Li Y."/>
            <person name="Xu H."/>
            <person name="Wei S."/>
            <person name="He X."/>
            <person name="Fang L."/>
            <person name="Zhang Z."/>
            <person name="Zhang Y."/>
            <person name="Huang X."/>
            <person name="Su Z."/>
            <person name="Tong W."/>
            <person name="Li J."/>
            <person name="Tong Z."/>
            <person name="Li S."/>
            <person name="Ye J."/>
            <person name="Wang L."/>
            <person name="Fang L."/>
            <person name="Lei T."/>
            <person name="Chen C.-S."/>
            <person name="Chen H.-C."/>
            <person name="Xu Z."/>
            <person name="Li H."/>
            <person name="Huang H."/>
            <person name="Zhang F."/>
            <person name="Xu H."/>
            <person name="Li N."/>
            <person name="Zhao C."/>
            <person name="Li S."/>
            <person name="Dong L."/>
            <person name="Huang Y."/>
            <person name="Li L."/>
            <person name="Xi Y."/>
            <person name="Qi Q."/>
            <person name="Li W."/>
            <person name="Zhang B."/>
            <person name="Hu W."/>
            <person name="Zhang Y."/>
            <person name="Tian X."/>
            <person name="Jiao Y."/>
            <person name="Liang X."/>
            <person name="Jin J."/>
            <person name="Gao L."/>
            <person name="Zheng W."/>
            <person name="Hao B."/>
            <person name="Liu S.-M."/>
            <person name="Wang W."/>
            <person name="Yuan L."/>
            <person name="Cao M."/>
            <person name="McDermott J."/>
            <person name="Samudrala R."/>
            <person name="Wang J."/>
            <person name="Wong G.K.-S."/>
            <person name="Yang H."/>
        </authorList>
    </citation>
    <scope>NUCLEOTIDE SEQUENCE [LARGE SCALE GENOMIC DNA]</scope>
    <source>
        <strain>cv. Nipponbare</strain>
    </source>
</reference>
<reference key="7">
    <citation type="journal article" date="2003" name="Science">
        <title>Collection, mapping, and annotation of over 28,000 cDNA clones from japonica rice.</title>
        <authorList>
            <consortium name="The rice full-length cDNA consortium"/>
        </authorList>
    </citation>
    <scope>NUCLEOTIDE SEQUENCE [LARGE SCALE MRNA]</scope>
    <source>
        <strain>cv. Nipponbare</strain>
    </source>
</reference>
<reference key="8">
    <citation type="journal article" date="2006" name="Genome">
        <title>Distribution, structure, organ-specific expression, and phylogenic analysis of the pathogenesis-related protein-3 chitinase gene family in rice (Oryza sativa L.).</title>
        <authorList>
            <person name="Nakazaki T."/>
            <person name="Tsukiyama T."/>
            <person name="Okumoto Y."/>
            <person name="Kageyama D."/>
            <person name="Naito K."/>
            <person name="Inouye K."/>
            <person name="Tanisaka T."/>
        </authorList>
    </citation>
    <scope>GENE FAMILY</scope>
    <scope>NOMENCLATURE</scope>
    <scope>TISSUE SPECIFICITY</scope>
</reference>
<feature type="signal peptide" evidence="2">
    <location>
        <begin position="1"/>
        <end position="29"/>
    </location>
</feature>
<feature type="chain" id="PRO_0000383464" description="Chitinase 5">
    <location>
        <begin position="30"/>
        <end position="288"/>
    </location>
</feature>
<feature type="domain" description="Chitin-binding type-1" evidence="3">
    <location>
        <begin position="30"/>
        <end position="64"/>
    </location>
</feature>
<feature type="active site" description="Proton donor" evidence="1">
    <location>
        <position position="151"/>
    </location>
</feature>
<feature type="disulfide bond" evidence="3">
    <location>
        <begin position="32"/>
        <end position="40"/>
    </location>
</feature>
<feature type="disulfide bond" evidence="3">
    <location>
        <begin position="34"/>
        <end position="46"/>
    </location>
</feature>
<feature type="disulfide bond" evidence="3">
    <location>
        <begin position="39"/>
        <end position="53"/>
    </location>
</feature>
<feature type="disulfide bond" evidence="3">
    <location>
        <begin position="57"/>
        <end position="62"/>
    </location>
</feature>
<feature type="disulfide bond" evidence="3">
    <location>
        <begin position="107"/>
        <end position="156"/>
    </location>
</feature>
<feature type="disulfide bond" evidence="3">
    <location>
        <begin position="169"/>
        <end position="178"/>
    </location>
</feature>
<feature type="disulfide bond" evidence="3">
    <location>
        <begin position="256"/>
        <end position="288"/>
    </location>
</feature>
<gene>
    <name type="primary">Cht5</name>
    <name type="ordered locus">Os04g0494100</name>
    <name type="ordered locus">LOC_Os04g41680</name>
    <name type="ORF">OsJ_15308</name>
    <name type="ORF">OSJNBb0091E11.12</name>
</gene>
<dbReference type="EC" id="3.2.1.14"/>
<dbReference type="EMBL" id="AB096140">
    <property type="protein sequence ID" value="BAC76691.1"/>
    <property type="molecule type" value="mRNA"/>
</dbReference>
<dbReference type="EMBL" id="AL606629">
    <property type="protein sequence ID" value="CAE01675.2"/>
    <property type="molecule type" value="Genomic_DNA"/>
</dbReference>
<dbReference type="EMBL" id="AP008210">
    <property type="protein sequence ID" value="BAF15100.1"/>
    <property type="molecule type" value="Genomic_DNA"/>
</dbReference>
<dbReference type="EMBL" id="AP014960">
    <property type="protein sequence ID" value="BAS89869.1"/>
    <property type="molecule type" value="Genomic_DNA"/>
</dbReference>
<dbReference type="EMBL" id="CM000141">
    <property type="protein sequence ID" value="EEE61251.1"/>
    <property type="molecule type" value="Genomic_DNA"/>
</dbReference>
<dbReference type="EMBL" id="AK071013">
    <property type="protein sequence ID" value="BAG92259.1"/>
    <property type="molecule type" value="mRNA"/>
</dbReference>
<dbReference type="EMBL" id="AK104242">
    <property type="protein sequence ID" value="BAG96537.1"/>
    <property type="molecule type" value="mRNA"/>
</dbReference>
<dbReference type="EMBL" id="AK104426">
    <property type="protein sequence ID" value="BAG96672.1"/>
    <property type="molecule type" value="mRNA"/>
</dbReference>
<dbReference type="RefSeq" id="XP_015636326.1">
    <property type="nucleotide sequence ID" value="XM_015780840.1"/>
</dbReference>
<dbReference type="SMR" id="Q7Y1Z0"/>
<dbReference type="FunCoup" id="Q7Y1Z0">
    <property type="interactions" value="151"/>
</dbReference>
<dbReference type="STRING" id="39947.Q7Y1Z0"/>
<dbReference type="CAZy" id="CBM18">
    <property type="family name" value="Carbohydrate-Binding Module Family 18"/>
</dbReference>
<dbReference type="CAZy" id="GH19">
    <property type="family name" value="Glycoside Hydrolase Family 19"/>
</dbReference>
<dbReference type="PaxDb" id="39947-Q7Y1Z0"/>
<dbReference type="EnsemblPlants" id="Os04t0494100-02">
    <property type="protein sequence ID" value="Os04t0494100-02"/>
    <property type="gene ID" value="Os04g0494100"/>
</dbReference>
<dbReference type="Gramene" id="Os04t0494100-02">
    <property type="protein sequence ID" value="Os04t0494100-02"/>
    <property type="gene ID" value="Os04g0494100"/>
</dbReference>
<dbReference type="KEGG" id="dosa:Os04g0494100"/>
<dbReference type="eggNOG" id="KOG4742">
    <property type="taxonomic scope" value="Eukaryota"/>
</dbReference>
<dbReference type="HOGENOM" id="CLU_045506_1_1_1"/>
<dbReference type="InParanoid" id="Q7Y1Z0"/>
<dbReference type="OMA" id="YYNDYCT"/>
<dbReference type="OrthoDB" id="5985073at2759"/>
<dbReference type="Proteomes" id="UP000000763">
    <property type="component" value="Chromosome 4"/>
</dbReference>
<dbReference type="Proteomes" id="UP000007752">
    <property type="component" value="Chromosome 4"/>
</dbReference>
<dbReference type="Proteomes" id="UP000059680">
    <property type="component" value="Chromosome 4"/>
</dbReference>
<dbReference type="GO" id="GO:0008061">
    <property type="term" value="F:chitin binding"/>
    <property type="evidence" value="ECO:0007669"/>
    <property type="project" value="UniProtKB-KW"/>
</dbReference>
<dbReference type="GO" id="GO:0004568">
    <property type="term" value="F:chitinase activity"/>
    <property type="evidence" value="ECO:0000318"/>
    <property type="project" value="GO_Central"/>
</dbReference>
<dbReference type="GO" id="GO:0008843">
    <property type="term" value="F:endochitinase activity"/>
    <property type="evidence" value="ECO:0007669"/>
    <property type="project" value="UniProtKB-EC"/>
</dbReference>
<dbReference type="GO" id="GO:0016998">
    <property type="term" value="P:cell wall macromolecule catabolic process"/>
    <property type="evidence" value="ECO:0007669"/>
    <property type="project" value="InterPro"/>
</dbReference>
<dbReference type="GO" id="GO:0006032">
    <property type="term" value="P:chitin catabolic process"/>
    <property type="evidence" value="ECO:0007669"/>
    <property type="project" value="UniProtKB-KW"/>
</dbReference>
<dbReference type="GO" id="GO:0006952">
    <property type="term" value="P:defense response"/>
    <property type="evidence" value="ECO:0007669"/>
    <property type="project" value="UniProtKB-KW"/>
</dbReference>
<dbReference type="GO" id="GO:0000272">
    <property type="term" value="P:polysaccharide catabolic process"/>
    <property type="evidence" value="ECO:0007669"/>
    <property type="project" value="UniProtKB-KW"/>
</dbReference>
<dbReference type="CDD" id="cd00325">
    <property type="entry name" value="chitinase_GH19"/>
    <property type="match status" value="1"/>
</dbReference>
<dbReference type="CDD" id="cd00035">
    <property type="entry name" value="ChtBD1"/>
    <property type="match status" value="1"/>
</dbReference>
<dbReference type="FunFam" id="3.30.60.10:FF:000002">
    <property type="entry name" value="Chitinase B"/>
    <property type="match status" value="1"/>
</dbReference>
<dbReference type="FunFam" id="3.30.20.10:FF:000001">
    <property type="entry name" value="Endochitinase (Chitinase)"/>
    <property type="match status" value="1"/>
</dbReference>
<dbReference type="FunFam" id="1.10.530.10:FF:000052">
    <property type="entry name" value="Endochitinase PR4"/>
    <property type="match status" value="1"/>
</dbReference>
<dbReference type="Gene3D" id="1.10.530.10">
    <property type="match status" value="1"/>
</dbReference>
<dbReference type="Gene3D" id="3.30.20.10">
    <property type="entry name" value="Endochitinase, domain 2"/>
    <property type="match status" value="1"/>
</dbReference>
<dbReference type="Gene3D" id="3.30.60.10">
    <property type="entry name" value="Endochitinase-like"/>
    <property type="match status" value="1"/>
</dbReference>
<dbReference type="InterPro" id="IPR001002">
    <property type="entry name" value="Chitin-bd_1"/>
</dbReference>
<dbReference type="InterPro" id="IPR018371">
    <property type="entry name" value="Chitin-binding_1_CS"/>
</dbReference>
<dbReference type="InterPro" id="IPR036861">
    <property type="entry name" value="Endochitinase-like_sf"/>
</dbReference>
<dbReference type="InterPro" id="IPR016283">
    <property type="entry name" value="Glyco_hydro_19"/>
</dbReference>
<dbReference type="InterPro" id="IPR000726">
    <property type="entry name" value="Glyco_hydro_19_cat"/>
</dbReference>
<dbReference type="InterPro" id="IPR023346">
    <property type="entry name" value="Lysozyme-like_dom_sf"/>
</dbReference>
<dbReference type="PANTHER" id="PTHR22595:SF197">
    <property type="entry name" value="CHITINASE FAMILY PROTEIN"/>
    <property type="match status" value="1"/>
</dbReference>
<dbReference type="PANTHER" id="PTHR22595">
    <property type="entry name" value="CHITINASE-RELATED"/>
    <property type="match status" value="1"/>
</dbReference>
<dbReference type="Pfam" id="PF00187">
    <property type="entry name" value="Chitin_bind_1"/>
    <property type="match status" value="1"/>
</dbReference>
<dbReference type="Pfam" id="PF00182">
    <property type="entry name" value="Glyco_hydro_19"/>
    <property type="match status" value="2"/>
</dbReference>
<dbReference type="PIRSF" id="PIRSF001060">
    <property type="entry name" value="Endochitinase"/>
    <property type="match status" value="1"/>
</dbReference>
<dbReference type="SMART" id="SM00270">
    <property type="entry name" value="ChtBD1"/>
    <property type="match status" value="1"/>
</dbReference>
<dbReference type="SUPFAM" id="SSF53955">
    <property type="entry name" value="Lysozyme-like"/>
    <property type="match status" value="1"/>
</dbReference>
<dbReference type="SUPFAM" id="SSF57016">
    <property type="entry name" value="Plant lectins/antimicrobial peptides"/>
    <property type="match status" value="1"/>
</dbReference>
<dbReference type="PROSITE" id="PS00026">
    <property type="entry name" value="CHIT_BIND_I_1"/>
    <property type="match status" value="1"/>
</dbReference>
<dbReference type="PROSITE" id="PS50941">
    <property type="entry name" value="CHIT_BIND_I_2"/>
    <property type="match status" value="1"/>
</dbReference>
<dbReference type="PROSITE" id="PS00773">
    <property type="entry name" value="CHITINASE_19_1"/>
    <property type="match status" value="1"/>
</dbReference>
<dbReference type="PROSITE" id="PS00774">
    <property type="entry name" value="CHITINASE_19_2"/>
    <property type="match status" value="1"/>
</dbReference>
<proteinExistence type="evidence at transcript level"/>
<evidence type="ECO:0000250" key="1">
    <source>
        <dbReference type="UniProtKB" id="P29022"/>
    </source>
</evidence>
<evidence type="ECO:0000255" key="2"/>
<evidence type="ECO:0000255" key="3">
    <source>
        <dbReference type="PROSITE-ProRule" id="PRU00261"/>
    </source>
</evidence>
<evidence type="ECO:0000269" key="4">
    <source>
    </source>
</evidence>
<evidence type="ECO:0000305" key="5"/>
<organism>
    <name type="scientific">Oryza sativa subsp. japonica</name>
    <name type="common">Rice</name>
    <dbReference type="NCBI Taxonomy" id="39947"/>
    <lineage>
        <taxon>Eukaryota</taxon>
        <taxon>Viridiplantae</taxon>
        <taxon>Streptophyta</taxon>
        <taxon>Embryophyta</taxon>
        <taxon>Tracheophyta</taxon>
        <taxon>Spermatophyta</taxon>
        <taxon>Magnoliopsida</taxon>
        <taxon>Liliopsida</taxon>
        <taxon>Poales</taxon>
        <taxon>Poaceae</taxon>
        <taxon>BOP clade</taxon>
        <taxon>Oryzoideae</taxon>
        <taxon>Oryzeae</taxon>
        <taxon>Oryzinae</taxon>
        <taxon>Oryza</taxon>
        <taxon>Oryza sativa</taxon>
    </lineage>
</organism>
<keyword id="KW-0119">Carbohydrate metabolism</keyword>
<keyword id="KW-0146">Chitin degradation</keyword>
<keyword id="KW-0147">Chitin-binding</keyword>
<keyword id="KW-1015">Disulfide bond</keyword>
<keyword id="KW-0326">Glycosidase</keyword>
<keyword id="KW-0378">Hydrolase</keyword>
<keyword id="KW-0611">Plant defense</keyword>
<keyword id="KW-0624">Polysaccharide degradation</keyword>
<keyword id="KW-1185">Reference proteome</keyword>
<keyword id="KW-0732">Signal</keyword>
<protein>
    <recommendedName>
        <fullName>Chitinase 5</fullName>
        <ecNumber>3.2.1.14</ecNumber>
    </recommendedName>
    <alternativeName>
        <fullName>Class IV chitinase a</fullName>
        <shortName>OsChia4a</shortName>
    </alternativeName>
    <alternativeName>
        <fullName>Pathogenesis related (PR)-3 chitinase 5</fullName>
    </alternativeName>
</protein>
<name>CHI5_ORYSJ</name>